<keyword id="KW-0002">3D-structure</keyword>
<keyword id="KW-0025">Alternative splicing</keyword>
<keyword id="KW-0963">Cytoplasm</keyword>
<keyword id="KW-0225">Disease variant</keyword>
<keyword id="KW-0488">Methylation</keyword>
<keyword id="KW-0523">Neurodegeneration</keyword>
<keyword id="KW-0622">Neuropathy</keyword>
<keyword id="KW-0539">Nucleus</keyword>
<keyword id="KW-0597">Phosphoprotein</keyword>
<keyword id="KW-1267">Proteomics identification</keyword>
<keyword id="KW-1185">Reference proteome</keyword>
<keyword id="KW-0677">Repeat</keyword>
<keyword id="KW-0833">Ubl conjugation pathway</keyword>
<keyword id="KW-0853">WD repeat</keyword>
<name>DCAF8_HUMAN</name>
<protein>
    <recommendedName>
        <fullName>DDB1- and CUL4-associated factor 8</fullName>
    </recommendedName>
    <alternativeName>
        <fullName>WD repeat-containing protein 42A</fullName>
    </alternativeName>
</protein>
<reference key="1">
    <citation type="submission" date="1994-02" db="EMBL/GenBank/DDBJ databases">
        <title>H326 is a human gene homologous to murine PC326 that is ubiquitously expressed, and has a murine homologue that is also ubiquitously expressed.</title>
        <authorList>
            <person name="Bergsagel P.L."/>
            <person name="Kuehl W."/>
        </authorList>
    </citation>
    <scope>NUCLEOTIDE SEQUENCE [MRNA] (ISOFORM 1)</scope>
    <source>
        <tissue>Myeloma</tissue>
    </source>
</reference>
<reference key="2">
    <citation type="submission" date="2005-04" db="EMBL/GenBank/DDBJ databases">
        <authorList>
            <person name="Totoki Y."/>
            <person name="Toyoda A."/>
            <person name="Takeda T."/>
            <person name="Sakaki Y."/>
            <person name="Tanaka A."/>
            <person name="Yokoyama S."/>
        </authorList>
    </citation>
    <scope>NUCLEOTIDE SEQUENCE [LARGE SCALE MRNA] (ISOFORM 1)</scope>
    <source>
        <tissue>Synovium</tissue>
    </source>
</reference>
<reference key="3">
    <citation type="journal article" date="2007" name="BMC Genomics">
        <title>The full-ORF clone resource of the German cDNA consortium.</title>
        <authorList>
            <person name="Bechtel S."/>
            <person name="Rosenfelder H."/>
            <person name="Duda A."/>
            <person name="Schmidt C.P."/>
            <person name="Ernst U."/>
            <person name="Wellenreuther R."/>
            <person name="Mehrle A."/>
            <person name="Schuster C."/>
            <person name="Bahr A."/>
            <person name="Bloecker H."/>
            <person name="Heubner D."/>
            <person name="Hoerlein A."/>
            <person name="Michel G."/>
            <person name="Wedler H."/>
            <person name="Koehrer K."/>
            <person name="Ottenwaelder B."/>
            <person name="Poustka A."/>
            <person name="Wiemann S."/>
            <person name="Schupp I."/>
        </authorList>
    </citation>
    <scope>NUCLEOTIDE SEQUENCE [LARGE SCALE MRNA] (ISOFORM 1)</scope>
    <source>
        <tissue>Colon carcinoma</tissue>
    </source>
</reference>
<reference key="4">
    <citation type="journal article" date="2006" name="Nature">
        <title>The DNA sequence and biological annotation of human chromosome 1.</title>
        <authorList>
            <person name="Gregory S.G."/>
            <person name="Barlow K.F."/>
            <person name="McLay K.E."/>
            <person name="Kaul R."/>
            <person name="Swarbreck D."/>
            <person name="Dunham A."/>
            <person name="Scott C.E."/>
            <person name="Howe K.L."/>
            <person name="Woodfine K."/>
            <person name="Spencer C.C.A."/>
            <person name="Jones M.C."/>
            <person name="Gillson C."/>
            <person name="Searle S."/>
            <person name="Zhou Y."/>
            <person name="Kokocinski F."/>
            <person name="McDonald L."/>
            <person name="Evans R."/>
            <person name="Phillips K."/>
            <person name="Atkinson A."/>
            <person name="Cooper R."/>
            <person name="Jones C."/>
            <person name="Hall R.E."/>
            <person name="Andrews T.D."/>
            <person name="Lloyd C."/>
            <person name="Ainscough R."/>
            <person name="Almeida J.P."/>
            <person name="Ambrose K.D."/>
            <person name="Anderson F."/>
            <person name="Andrew R.W."/>
            <person name="Ashwell R.I.S."/>
            <person name="Aubin K."/>
            <person name="Babbage A.K."/>
            <person name="Bagguley C.L."/>
            <person name="Bailey J."/>
            <person name="Beasley H."/>
            <person name="Bethel G."/>
            <person name="Bird C.P."/>
            <person name="Bray-Allen S."/>
            <person name="Brown J.Y."/>
            <person name="Brown A.J."/>
            <person name="Buckley D."/>
            <person name="Burton J."/>
            <person name="Bye J."/>
            <person name="Carder C."/>
            <person name="Chapman J.C."/>
            <person name="Clark S.Y."/>
            <person name="Clarke G."/>
            <person name="Clee C."/>
            <person name="Cobley V."/>
            <person name="Collier R.E."/>
            <person name="Corby N."/>
            <person name="Coville G.J."/>
            <person name="Davies J."/>
            <person name="Deadman R."/>
            <person name="Dunn M."/>
            <person name="Earthrowl M."/>
            <person name="Ellington A.G."/>
            <person name="Errington H."/>
            <person name="Frankish A."/>
            <person name="Frankland J."/>
            <person name="French L."/>
            <person name="Garner P."/>
            <person name="Garnett J."/>
            <person name="Gay L."/>
            <person name="Ghori M.R.J."/>
            <person name="Gibson R."/>
            <person name="Gilby L.M."/>
            <person name="Gillett W."/>
            <person name="Glithero R.J."/>
            <person name="Grafham D.V."/>
            <person name="Griffiths C."/>
            <person name="Griffiths-Jones S."/>
            <person name="Grocock R."/>
            <person name="Hammond S."/>
            <person name="Harrison E.S.I."/>
            <person name="Hart E."/>
            <person name="Haugen E."/>
            <person name="Heath P.D."/>
            <person name="Holmes S."/>
            <person name="Holt K."/>
            <person name="Howden P.J."/>
            <person name="Hunt A.R."/>
            <person name="Hunt S.E."/>
            <person name="Hunter G."/>
            <person name="Isherwood J."/>
            <person name="James R."/>
            <person name="Johnson C."/>
            <person name="Johnson D."/>
            <person name="Joy A."/>
            <person name="Kay M."/>
            <person name="Kershaw J.K."/>
            <person name="Kibukawa M."/>
            <person name="Kimberley A.M."/>
            <person name="King A."/>
            <person name="Knights A.J."/>
            <person name="Lad H."/>
            <person name="Laird G."/>
            <person name="Lawlor S."/>
            <person name="Leongamornlert D.A."/>
            <person name="Lloyd D.M."/>
            <person name="Loveland J."/>
            <person name="Lovell J."/>
            <person name="Lush M.J."/>
            <person name="Lyne R."/>
            <person name="Martin S."/>
            <person name="Mashreghi-Mohammadi M."/>
            <person name="Matthews L."/>
            <person name="Matthews N.S.W."/>
            <person name="McLaren S."/>
            <person name="Milne S."/>
            <person name="Mistry S."/>
            <person name="Moore M.J.F."/>
            <person name="Nickerson T."/>
            <person name="O'Dell C.N."/>
            <person name="Oliver K."/>
            <person name="Palmeiri A."/>
            <person name="Palmer S.A."/>
            <person name="Parker A."/>
            <person name="Patel D."/>
            <person name="Pearce A.V."/>
            <person name="Peck A.I."/>
            <person name="Pelan S."/>
            <person name="Phelps K."/>
            <person name="Phillimore B.J."/>
            <person name="Plumb R."/>
            <person name="Rajan J."/>
            <person name="Raymond C."/>
            <person name="Rouse G."/>
            <person name="Saenphimmachak C."/>
            <person name="Sehra H.K."/>
            <person name="Sheridan E."/>
            <person name="Shownkeen R."/>
            <person name="Sims S."/>
            <person name="Skuce C.D."/>
            <person name="Smith M."/>
            <person name="Steward C."/>
            <person name="Subramanian S."/>
            <person name="Sycamore N."/>
            <person name="Tracey A."/>
            <person name="Tromans A."/>
            <person name="Van Helmond Z."/>
            <person name="Wall M."/>
            <person name="Wallis J.M."/>
            <person name="White S."/>
            <person name="Whitehead S.L."/>
            <person name="Wilkinson J.E."/>
            <person name="Willey D.L."/>
            <person name="Williams H."/>
            <person name="Wilming L."/>
            <person name="Wray P.W."/>
            <person name="Wu Z."/>
            <person name="Coulson A."/>
            <person name="Vaudin M."/>
            <person name="Sulston J.E."/>
            <person name="Durbin R.M."/>
            <person name="Hubbard T."/>
            <person name="Wooster R."/>
            <person name="Dunham I."/>
            <person name="Carter N.P."/>
            <person name="McVean G."/>
            <person name="Ross M.T."/>
            <person name="Harrow J."/>
            <person name="Olson M.V."/>
            <person name="Beck S."/>
            <person name="Rogers J."/>
            <person name="Bentley D.R."/>
        </authorList>
    </citation>
    <scope>NUCLEOTIDE SEQUENCE [LARGE SCALE GENOMIC DNA]</scope>
</reference>
<reference key="5">
    <citation type="submission" date="2005-09" db="EMBL/GenBank/DDBJ databases">
        <authorList>
            <person name="Mural R.J."/>
            <person name="Istrail S."/>
            <person name="Sutton G.G."/>
            <person name="Florea L."/>
            <person name="Halpern A.L."/>
            <person name="Mobarry C.M."/>
            <person name="Lippert R."/>
            <person name="Walenz B."/>
            <person name="Shatkay H."/>
            <person name="Dew I."/>
            <person name="Miller J.R."/>
            <person name="Flanigan M.J."/>
            <person name="Edwards N.J."/>
            <person name="Bolanos R."/>
            <person name="Fasulo D."/>
            <person name="Halldorsson B.V."/>
            <person name="Hannenhalli S."/>
            <person name="Turner R."/>
            <person name="Yooseph S."/>
            <person name="Lu F."/>
            <person name="Nusskern D.R."/>
            <person name="Shue B.C."/>
            <person name="Zheng X.H."/>
            <person name="Zhong F."/>
            <person name="Delcher A.L."/>
            <person name="Huson D.H."/>
            <person name="Kravitz S.A."/>
            <person name="Mouchard L."/>
            <person name="Reinert K."/>
            <person name="Remington K.A."/>
            <person name="Clark A.G."/>
            <person name="Waterman M.S."/>
            <person name="Eichler E.E."/>
            <person name="Adams M.D."/>
            <person name="Hunkapiller M.W."/>
            <person name="Myers E.W."/>
            <person name="Venter J.C."/>
        </authorList>
    </citation>
    <scope>NUCLEOTIDE SEQUENCE [LARGE SCALE GENOMIC DNA]</scope>
</reference>
<reference key="6">
    <citation type="journal article" date="2004" name="Genome Res.">
        <title>The status, quality, and expansion of the NIH full-length cDNA project: the Mammalian Gene Collection (MGC).</title>
        <authorList>
            <consortium name="The MGC Project Team"/>
        </authorList>
    </citation>
    <scope>NUCLEOTIDE SEQUENCE [LARGE SCALE MRNA] (ISOFORMS 1 AND 2)</scope>
    <source>
        <tissue>Brain</tissue>
        <tissue>Skin</tissue>
    </source>
</reference>
<reference key="7">
    <citation type="journal article" date="2006" name="Mol. Cell">
        <title>A family of diverse Cul4-Ddb1-interacting proteins includes Cdt2, which is required for S phase destruction of the replication factor Cdt1.</title>
        <authorList>
            <person name="Jin J."/>
            <person name="Arias E.E."/>
            <person name="Chen J."/>
            <person name="Harper J.W."/>
            <person name="Walter J.C."/>
        </authorList>
    </citation>
    <scope>FUNCTION</scope>
    <scope>INTERACTION WITH DDB1; CUL4A AND CUL4B</scope>
    <scope>IDENTIFICATION BY MASS SPECTROMETRY</scope>
    <scope>MUTAGENESIS OF ARG-314 AND ARG-362</scope>
</reference>
<reference key="8">
    <citation type="journal article" date="2006" name="Nature">
        <title>Molecular architecture and assembly of the DDB1-CUL4A ubiquitin ligase machinery.</title>
        <authorList>
            <person name="Angers S."/>
            <person name="Li T."/>
            <person name="Yi X."/>
            <person name="MacCoss M.J."/>
            <person name="Moon R.T."/>
            <person name="Zheng N."/>
        </authorList>
    </citation>
    <scope>FUNCTION</scope>
</reference>
<reference key="9">
    <citation type="journal article" date="2012" name="FEBS Lett.">
        <title>Characterization of nuclear import and export signals determining the subcellular localization of WD repeat-containing protein 42A (WDR42A).</title>
        <authorList>
            <person name="Wu F."/>
            <person name="Wang S."/>
            <person name="Xing J."/>
            <person name="Li M."/>
            <person name="Zheng C."/>
        </authorList>
    </citation>
    <scope>SUBCELLULAR LOCATION</scope>
    <scope>INTERACTION WITH KPNA1; KPNB1 AND XPO1</scope>
    <scope>MUTAGENESIS OF 39-ILE--LEU-50 AND 115-ARG--ARG-122</scope>
</reference>
<reference key="10">
    <citation type="journal article" date="2013" name="Nat. Methods">
        <title>A Y2H-seq approach defines the human protein methyltransferase interactome.</title>
        <authorList>
            <person name="Weimann M."/>
            <person name="Grossmann A."/>
            <person name="Woodsmith J."/>
            <person name="Ozkan Z."/>
            <person name="Birth P."/>
            <person name="Meierhofer D."/>
            <person name="Benlasfer N."/>
            <person name="Valovka T."/>
            <person name="Timmermann B."/>
            <person name="Wanker E.E."/>
            <person name="Sauer S."/>
            <person name="Stelzl U."/>
        </authorList>
    </citation>
    <scope>METHYLATION AT ARG-204 BY PRMT1</scope>
    <scope>IDENTIFICATION BY MASS SPECTROMETRY</scope>
</reference>
<reference key="11">
    <citation type="journal article" date="2014" name="Neurology">
        <title>Ubiquitin ligase defect by DCAF8 mutation causes HMSN2 with giant axons.</title>
        <authorList>
            <person name="Klein C.J."/>
            <person name="Wu Y."/>
            <person name="Vogel P."/>
            <person name="Goebel H.H."/>
            <person name="Bonnemann C."/>
            <person name="Zukosky K."/>
            <person name="Botuyan M.V."/>
            <person name="Duan X."/>
            <person name="Middha S."/>
            <person name="Atkinson E.J."/>
            <person name="Mer G."/>
            <person name="Dyck P.J."/>
        </authorList>
    </citation>
    <scope>VARIANT GAN2 CYS-317</scope>
    <scope>INTERACTION WITH DDB1</scope>
    <scope>CHARACTERIZATION OF VARIANT GAN2 CYS-317</scope>
</reference>
<evidence type="ECO:0000250" key="1">
    <source>
        <dbReference type="UniProtKB" id="Q8N7N5"/>
    </source>
</evidence>
<evidence type="ECO:0000256" key="2">
    <source>
        <dbReference type="SAM" id="MobiDB-lite"/>
    </source>
</evidence>
<evidence type="ECO:0000269" key="3">
    <source>
    </source>
</evidence>
<evidence type="ECO:0000269" key="4">
    <source>
    </source>
</evidence>
<evidence type="ECO:0000269" key="5">
    <source>
    </source>
</evidence>
<evidence type="ECO:0000269" key="6">
    <source>
    </source>
</evidence>
<evidence type="ECO:0000269" key="7">
    <source>
    </source>
</evidence>
<evidence type="ECO:0000303" key="8">
    <source>
    </source>
</evidence>
<evidence type="ECO:0000305" key="9"/>
<evidence type="ECO:0007829" key="10">
    <source>
        <dbReference type="PDB" id="3I8E"/>
    </source>
</evidence>
<organism>
    <name type="scientific">Homo sapiens</name>
    <name type="common">Human</name>
    <dbReference type="NCBI Taxonomy" id="9606"/>
    <lineage>
        <taxon>Eukaryota</taxon>
        <taxon>Metazoa</taxon>
        <taxon>Chordata</taxon>
        <taxon>Craniata</taxon>
        <taxon>Vertebrata</taxon>
        <taxon>Euteleostomi</taxon>
        <taxon>Mammalia</taxon>
        <taxon>Eutheria</taxon>
        <taxon>Euarchontoglires</taxon>
        <taxon>Primates</taxon>
        <taxon>Haplorrhini</taxon>
        <taxon>Catarrhini</taxon>
        <taxon>Hominidae</taxon>
        <taxon>Homo</taxon>
    </lineage>
</organism>
<proteinExistence type="evidence at protein level"/>
<dbReference type="EMBL" id="U06631">
    <property type="protein sequence ID" value="AAA16607.1"/>
    <property type="status" value="ALT_FRAME"/>
    <property type="molecule type" value="mRNA"/>
</dbReference>
<dbReference type="EMBL" id="AK223475">
    <property type="protein sequence ID" value="BAD97195.1"/>
    <property type="molecule type" value="mRNA"/>
</dbReference>
<dbReference type="EMBL" id="CR749801">
    <property type="protein sequence ID" value="CAH18661.1"/>
    <property type="molecule type" value="mRNA"/>
</dbReference>
<dbReference type="EMBL" id="AL139011">
    <property type="status" value="NOT_ANNOTATED_CDS"/>
    <property type="molecule type" value="Genomic_DNA"/>
</dbReference>
<dbReference type="EMBL" id="CH471121">
    <property type="protein sequence ID" value="EAW52731.1"/>
    <property type="molecule type" value="Genomic_DNA"/>
</dbReference>
<dbReference type="EMBL" id="CH471121">
    <property type="protein sequence ID" value="EAW52732.1"/>
    <property type="molecule type" value="Genomic_DNA"/>
</dbReference>
<dbReference type="EMBL" id="BC013107">
    <property type="protein sequence ID" value="AAH13107.1"/>
    <property type="molecule type" value="mRNA"/>
</dbReference>
<dbReference type="EMBL" id="BC080597">
    <property type="protein sequence ID" value="AAH80597.1"/>
    <property type="molecule type" value="mRNA"/>
</dbReference>
<dbReference type="EMBL" id="BC098271">
    <property type="protein sequence ID" value="AAH98271.1"/>
    <property type="molecule type" value="mRNA"/>
</dbReference>
<dbReference type="EMBL" id="BC099709">
    <property type="protein sequence ID" value="AAH99709.1"/>
    <property type="molecule type" value="mRNA"/>
</dbReference>
<dbReference type="EMBL" id="BC099846">
    <property type="protein sequence ID" value="AAH99846.1"/>
    <property type="molecule type" value="mRNA"/>
</dbReference>
<dbReference type="EMBL" id="BC111063">
    <property type="protein sequence ID" value="AAI11064.1"/>
    <property type="molecule type" value="mRNA"/>
</dbReference>
<dbReference type="CCDS" id="CCDS1200.1">
    <molecule id="Q5TAQ9-1"/>
</dbReference>
<dbReference type="RefSeq" id="NP_056541.2">
    <molecule id="Q5TAQ9-1"/>
    <property type="nucleotide sequence ID" value="NM_015726.3"/>
</dbReference>
<dbReference type="PDB" id="3I8E">
    <property type="method" value="X-ray"/>
    <property type="resolution" value="3.40 A"/>
    <property type="chains" value="C/D=153-165"/>
</dbReference>
<dbReference type="PDBsum" id="3I8E"/>
<dbReference type="SMR" id="Q5TAQ9"/>
<dbReference type="BioGRID" id="119121">
    <property type="interactions" value="168"/>
</dbReference>
<dbReference type="ComplexPortal" id="CPX-2816">
    <property type="entry name" value="CRL4-DCAF8 E3 ubiquitin ligase complex, CUL4B variant"/>
</dbReference>
<dbReference type="ComplexPortal" id="CPX-2818">
    <property type="entry name" value="CRL4-DCAF8 E3 ubiquitin ligase complex, CUL4A variant"/>
</dbReference>
<dbReference type="DIP" id="DIP-48762N"/>
<dbReference type="FunCoup" id="Q5TAQ9">
    <property type="interactions" value="3930"/>
</dbReference>
<dbReference type="IntAct" id="Q5TAQ9">
    <property type="interactions" value="99"/>
</dbReference>
<dbReference type="MINT" id="Q5TAQ9"/>
<dbReference type="STRING" id="9606.ENSP00000357052"/>
<dbReference type="GlyGen" id="Q5TAQ9">
    <property type="glycosylation" value="1 site, 1 O-linked glycan (1 site)"/>
</dbReference>
<dbReference type="iPTMnet" id="Q5TAQ9"/>
<dbReference type="PhosphoSitePlus" id="Q5TAQ9"/>
<dbReference type="BioMuta" id="DCAF8"/>
<dbReference type="DMDM" id="74756455"/>
<dbReference type="jPOST" id="Q5TAQ9"/>
<dbReference type="MassIVE" id="Q5TAQ9"/>
<dbReference type="PaxDb" id="9606-ENSP00000357052"/>
<dbReference type="PeptideAtlas" id="Q5TAQ9"/>
<dbReference type="ProteomicsDB" id="64861">
    <molecule id="Q5TAQ9-1"/>
</dbReference>
<dbReference type="ProteomicsDB" id="64862">
    <molecule id="Q5TAQ9-2"/>
</dbReference>
<dbReference type="Pumba" id="Q5TAQ9"/>
<dbReference type="Antibodypedia" id="20487">
    <property type="antibodies" value="84 antibodies from 16 providers"/>
</dbReference>
<dbReference type="DNASU" id="50717"/>
<dbReference type="Ensembl" id="ENST00000326837.6">
    <molecule id="Q5TAQ9-1"/>
    <property type="protein sequence ID" value="ENSP00000318227.2"/>
    <property type="gene ID" value="ENSG00000132716.19"/>
</dbReference>
<dbReference type="Ensembl" id="ENST00000368073.7">
    <molecule id="Q5TAQ9-1"/>
    <property type="protein sequence ID" value="ENSP00000357052.3"/>
    <property type="gene ID" value="ENSG00000132716.19"/>
</dbReference>
<dbReference type="Ensembl" id="ENST00000368074.6">
    <molecule id="Q5TAQ9-1"/>
    <property type="protein sequence ID" value="ENSP00000357053.1"/>
    <property type="gene ID" value="ENSG00000132716.19"/>
</dbReference>
<dbReference type="Ensembl" id="ENST00000475733.5">
    <molecule id="Q5TAQ9-2"/>
    <property type="protein sequence ID" value="ENSP00000476351.1"/>
    <property type="gene ID" value="ENSG00000132716.19"/>
</dbReference>
<dbReference type="Ensembl" id="ENST00000610139.5">
    <molecule id="Q5TAQ9-2"/>
    <property type="protein sequence ID" value="ENSP00000477464.1"/>
    <property type="gene ID" value="ENSG00000132716.19"/>
</dbReference>
<dbReference type="GeneID" id="50717"/>
<dbReference type="KEGG" id="hsa:50717"/>
<dbReference type="MANE-Select" id="ENST00000368074.6">
    <property type="protein sequence ID" value="ENSP00000357053.1"/>
    <property type="RefSeq nucleotide sequence ID" value="NM_015726.4"/>
    <property type="RefSeq protein sequence ID" value="NP_056541.2"/>
</dbReference>
<dbReference type="UCSC" id="uc001fvn.3">
    <molecule id="Q5TAQ9-1"/>
    <property type="organism name" value="human"/>
</dbReference>
<dbReference type="AGR" id="HGNC:24891"/>
<dbReference type="CTD" id="50717"/>
<dbReference type="DisGeNET" id="50717"/>
<dbReference type="GeneCards" id="DCAF8"/>
<dbReference type="HGNC" id="HGNC:24891">
    <property type="gene designation" value="DCAF8"/>
</dbReference>
<dbReference type="HPA" id="ENSG00000132716">
    <property type="expression patterns" value="Low tissue specificity"/>
</dbReference>
<dbReference type="MalaCards" id="DCAF8"/>
<dbReference type="MIM" id="610100">
    <property type="type" value="phenotype"/>
</dbReference>
<dbReference type="MIM" id="615820">
    <property type="type" value="gene"/>
</dbReference>
<dbReference type="neXtProt" id="NX_Q5TAQ9"/>
<dbReference type="OpenTargets" id="ENSG00000132716"/>
<dbReference type="Orphanet" id="401964">
    <property type="disease" value="Autosomal dominant Charcot-Marie-Tooth disease type 2 with giant axons"/>
</dbReference>
<dbReference type="PharmGKB" id="PA165751195"/>
<dbReference type="VEuPathDB" id="HostDB:ENSG00000132716"/>
<dbReference type="eggNOG" id="KOG1334">
    <property type="taxonomic scope" value="Eukaryota"/>
</dbReference>
<dbReference type="eggNOG" id="KOG3133">
    <property type="taxonomic scope" value="Eukaryota"/>
</dbReference>
<dbReference type="GeneTree" id="ENSGT00950000182900"/>
<dbReference type="HOGENOM" id="CLU_012381_4_1_1"/>
<dbReference type="InParanoid" id="Q5TAQ9"/>
<dbReference type="OMA" id="MRMMNGD"/>
<dbReference type="OrthoDB" id="4869960at2759"/>
<dbReference type="PAN-GO" id="Q5TAQ9">
    <property type="GO annotations" value="2 GO annotations based on evolutionary models"/>
</dbReference>
<dbReference type="PhylomeDB" id="Q5TAQ9"/>
<dbReference type="TreeFam" id="TF326071"/>
<dbReference type="PathwayCommons" id="Q5TAQ9"/>
<dbReference type="Reactome" id="R-HSA-8951664">
    <property type="pathway name" value="Neddylation"/>
</dbReference>
<dbReference type="SignaLink" id="Q5TAQ9"/>
<dbReference type="UniPathway" id="UPA00143"/>
<dbReference type="BioGRID-ORCS" id="50717">
    <property type="hits" value="9 hits in 1186 CRISPR screens"/>
</dbReference>
<dbReference type="ChiTaRS" id="DCAF8">
    <property type="organism name" value="human"/>
</dbReference>
<dbReference type="EvolutionaryTrace" id="Q5TAQ9"/>
<dbReference type="GenomeRNAi" id="50717"/>
<dbReference type="Pharos" id="Q5TAQ9">
    <property type="development level" value="Tbio"/>
</dbReference>
<dbReference type="PRO" id="PR:Q5TAQ9"/>
<dbReference type="Proteomes" id="UP000005640">
    <property type="component" value="Chromosome 1"/>
</dbReference>
<dbReference type="RNAct" id="Q5TAQ9">
    <property type="molecule type" value="protein"/>
</dbReference>
<dbReference type="Bgee" id="ENSG00000132716">
    <property type="expression patterns" value="Expressed in right uterine tube and 95 other cell types or tissues"/>
</dbReference>
<dbReference type="ExpressionAtlas" id="Q5TAQ9">
    <property type="expression patterns" value="baseline and differential"/>
</dbReference>
<dbReference type="GO" id="GO:0080008">
    <property type="term" value="C:Cul4-RING E3 ubiquitin ligase complex"/>
    <property type="evidence" value="ECO:0000314"/>
    <property type="project" value="UniProtKB"/>
</dbReference>
<dbReference type="GO" id="GO:0005737">
    <property type="term" value="C:cytoplasm"/>
    <property type="evidence" value="ECO:0000314"/>
    <property type="project" value="UniProtKB"/>
</dbReference>
<dbReference type="GO" id="GO:0005829">
    <property type="term" value="C:cytosol"/>
    <property type="evidence" value="ECO:0000314"/>
    <property type="project" value="HPA"/>
</dbReference>
<dbReference type="GO" id="GO:0005739">
    <property type="term" value="C:mitochondrion"/>
    <property type="evidence" value="ECO:0000314"/>
    <property type="project" value="HPA"/>
</dbReference>
<dbReference type="GO" id="GO:0005654">
    <property type="term" value="C:nucleoplasm"/>
    <property type="evidence" value="ECO:0000314"/>
    <property type="project" value="HPA"/>
</dbReference>
<dbReference type="GO" id="GO:0005634">
    <property type="term" value="C:nucleus"/>
    <property type="evidence" value="ECO:0000314"/>
    <property type="project" value="UniProtKB"/>
</dbReference>
<dbReference type="GO" id="GO:0014904">
    <property type="term" value="P:myotube cell development"/>
    <property type="evidence" value="ECO:0007669"/>
    <property type="project" value="Ensembl"/>
</dbReference>
<dbReference type="GO" id="GO:0016567">
    <property type="term" value="P:protein ubiquitination"/>
    <property type="evidence" value="ECO:0007669"/>
    <property type="project" value="UniProtKB-UniPathway"/>
</dbReference>
<dbReference type="FunFam" id="2.130.10.10:FF:000144">
    <property type="entry name" value="DDB1- and CUL4-associated factor 8"/>
    <property type="match status" value="1"/>
</dbReference>
<dbReference type="Gene3D" id="2.130.10.10">
    <property type="entry name" value="YVTN repeat-like/Quinoprotein amine dehydrogenase"/>
    <property type="match status" value="1"/>
</dbReference>
<dbReference type="InterPro" id="IPR045151">
    <property type="entry name" value="DCAF8"/>
</dbReference>
<dbReference type="InterPro" id="IPR015943">
    <property type="entry name" value="WD40/YVTN_repeat-like_dom_sf"/>
</dbReference>
<dbReference type="InterPro" id="IPR036322">
    <property type="entry name" value="WD40_repeat_dom_sf"/>
</dbReference>
<dbReference type="InterPro" id="IPR001680">
    <property type="entry name" value="WD40_rpt"/>
</dbReference>
<dbReference type="PANTHER" id="PTHR15574:SF57">
    <property type="entry name" value="DDB1- AND CUL4-ASSOCIATED FACTOR 8"/>
    <property type="match status" value="1"/>
</dbReference>
<dbReference type="PANTHER" id="PTHR15574">
    <property type="entry name" value="WD REPEAT DOMAIN-CONTAINING FAMILY"/>
    <property type="match status" value="1"/>
</dbReference>
<dbReference type="Pfam" id="PF00400">
    <property type="entry name" value="WD40"/>
    <property type="match status" value="3"/>
</dbReference>
<dbReference type="SMART" id="SM00320">
    <property type="entry name" value="WD40"/>
    <property type="match status" value="7"/>
</dbReference>
<dbReference type="SUPFAM" id="SSF50978">
    <property type="entry name" value="WD40 repeat-like"/>
    <property type="match status" value="1"/>
</dbReference>
<dbReference type="PROSITE" id="PS50082">
    <property type="entry name" value="WD_REPEATS_2"/>
    <property type="match status" value="1"/>
</dbReference>
<dbReference type="PROSITE" id="PS50294">
    <property type="entry name" value="WD_REPEATS_REGION"/>
    <property type="match status" value="1"/>
</dbReference>
<comment type="function">
    <text evidence="3 4">May function as a substrate receptor for CUL4-DDB1 E3 ubiquitin-protein ligase complex.</text>
</comment>
<comment type="pathway">
    <text>Protein modification; protein ubiquitination.</text>
</comment>
<comment type="subunit">
    <text evidence="3 5 7">Interacts with DDB1, CUL4A and CUL4B. Interacts with KPNA1, KPNB1 and XPO1.</text>
</comment>
<comment type="interaction">
    <interactant intactId="EBI-740686">
        <id>Q5TAQ9</id>
    </interactant>
    <interactant intactId="EBI-350322">
        <id>Q16531</id>
        <label>DDB1</label>
    </interactant>
    <organismsDiffer>false</organismsDiffer>
    <experiments>10</experiments>
</comment>
<comment type="interaction">
    <interactant intactId="EBI-740686">
        <id>Q5TAQ9</id>
    </interactant>
    <interactant intactId="EBI-358383">
        <id>P52294</id>
        <label>KPNA1</label>
    </interactant>
    <organismsDiffer>false</organismsDiffer>
    <experiments>2</experiments>
</comment>
<comment type="interaction">
    <interactant intactId="EBI-740686">
        <id>Q5TAQ9</id>
    </interactant>
    <interactant intactId="EBI-724076">
        <id>Q99750</id>
        <label>MDFI</label>
    </interactant>
    <organismsDiffer>false</organismsDiffer>
    <experiments>6</experiments>
</comment>
<comment type="interaction">
    <interactant intactId="EBI-740686">
        <id>Q5TAQ9</id>
    </interactant>
    <interactant intactId="EBI-78738">
        <id>Q99873</id>
        <label>PRMT1</label>
    </interactant>
    <organismsDiffer>false</organismsDiffer>
    <experiments>2</experiments>
</comment>
<comment type="interaction">
    <interactant intactId="EBI-740686">
        <id>Q5TAQ9</id>
    </interactant>
    <interactant intactId="EBI-740322">
        <id>Q93062</id>
        <label>RBPMS</label>
    </interactant>
    <organismsDiffer>false</organismsDiffer>
    <experiments>3</experiments>
</comment>
<comment type="interaction">
    <interactant intactId="EBI-740686">
        <id>Q5TAQ9</id>
    </interactant>
    <interactant intactId="EBI-349968">
        <id>O43463</id>
        <label>SUV39H1</label>
    </interactant>
    <organismsDiffer>false</organismsDiffer>
    <experiments>2</experiments>
</comment>
<comment type="interaction">
    <interactant intactId="EBI-740686">
        <id>Q5TAQ9</id>
    </interactant>
    <interactant intactId="EBI-741515">
        <id>Q9NVV9</id>
        <label>THAP1</label>
    </interactant>
    <organismsDiffer>false</organismsDiffer>
    <experiments>3</experiments>
</comment>
<comment type="interaction">
    <interactant intactId="EBI-740686">
        <id>Q5TAQ9</id>
    </interactant>
    <interactant intactId="EBI-2130429">
        <id>Q9BYV2</id>
        <label>TRIM54</label>
    </interactant>
    <organismsDiffer>false</organismsDiffer>
    <experiments>2</experiments>
</comment>
<comment type="interaction">
    <interactant intactId="EBI-740686">
        <id>Q5TAQ9</id>
    </interactant>
    <interactant intactId="EBI-5661333">
        <id>Q969Q1</id>
        <label>TRIM63</label>
    </interactant>
    <organismsDiffer>false</organismsDiffer>
    <experiments>3</experiments>
</comment>
<comment type="interaction">
    <interactant intactId="EBI-740686">
        <id>Q5TAQ9</id>
    </interactant>
    <interactant intactId="EBI-6164519">
        <id>P12520</id>
        <label>vpr</label>
    </interactant>
    <organismsDiffer>true</organismsDiffer>
    <experiments>2</experiments>
</comment>
<comment type="interaction">
    <interactant intactId="EBI-25842815">
        <id>Q5TAQ9-2</id>
    </interactant>
    <interactant intactId="EBI-10976677">
        <id>G5E9A7</id>
        <label>DMWD</label>
    </interactant>
    <organismsDiffer>false</organismsDiffer>
    <experiments>3</experiments>
</comment>
<comment type="interaction">
    <interactant intactId="EBI-25842815">
        <id>Q5TAQ9-2</id>
    </interactant>
    <interactant intactId="EBI-750300">
        <id>Q01658</id>
        <label>DR1</label>
    </interactant>
    <organismsDiffer>false</organismsDiffer>
    <experiments>3</experiments>
</comment>
<comment type="interaction">
    <interactant intactId="EBI-25842815">
        <id>Q5TAQ9-2</id>
    </interactant>
    <interactant intactId="EBI-747754">
        <id>P28799</id>
        <label>GRN</label>
    </interactant>
    <organismsDiffer>false</organismsDiffer>
    <experiments>3</experiments>
</comment>
<comment type="interaction">
    <interactant intactId="EBI-25842815">
        <id>Q5TAQ9-2</id>
    </interactant>
    <interactant intactId="EBI-389564">
        <id>Q00403</id>
        <label>GTF2B</label>
    </interactant>
    <organismsDiffer>false</organismsDiffer>
    <experiments>3</experiments>
</comment>
<comment type="interaction">
    <interactant intactId="EBI-25842815">
        <id>Q5TAQ9-2</id>
    </interactant>
    <interactant intactId="EBI-1054873">
        <id>Q9Y5Q9</id>
        <label>GTF3C3</label>
    </interactant>
    <organismsDiffer>false</organismsDiffer>
    <experiments>3</experiments>
</comment>
<comment type="interaction">
    <interactant intactId="EBI-25842815">
        <id>Q5TAQ9-2</id>
    </interactant>
    <interactant intactId="EBI-352682">
        <id>P04792</id>
        <label>HSPB1</label>
    </interactant>
    <organismsDiffer>false</organismsDiffer>
    <experiments>3</experiments>
</comment>
<comment type="interaction">
    <interactant intactId="EBI-25842815">
        <id>Q5TAQ9-2</id>
    </interactant>
    <interactant intactId="EBI-517086">
        <id>O43464</id>
        <label>HTRA2</label>
    </interactant>
    <organismsDiffer>false</organismsDiffer>
    <experiments>3</experiments>
</comment>
<comment type="interaction">
    <interactant intactId="EBI-25842815">
        <id>Q5TAQ9-2</id>
    </interactant>
    <interactant intactId="EBI-1055254">
        <id>Q8WXH2</id>
        <label>JPH3</label>
    </interactant>
    <organismsDiffer>false</organismsDiffer>
    <experiments>3</experiments>
</comment>
<comment type="interaction">
    <interactant intactId="EBI-25842815">
        <id>Q5TAQ9-2</id>
    </interactant>
    <interactant intactId="EBI-10975473">
        <id>O60333-2</id>
        <label>KIF1B</label>
    </interactant>
    <organismsDiffer>false</organismsDiffer>
    <experiments>3</experiments>
</comment>
<comment type="interaction">
    <interactant intactId="EBI-25842815">
        <id>Q5TAQ9-2</id>
    </interactant>
    <interactant intactId="EBI-475646">
        <id>P07196</id>
        <label>NEFL</label>
    </interactant>
    <organismsDiffer>false</organismsDiffer>
    <experiments>3</experiments>
</comment>
<comment type="interaction">
    <interactant intactId="EBI-25842815">
        <id>Q5TAQ9-2</id>
    </interactant>
    <interactant intactId="EBI-1014472">
        <id>P35240</id>
        <label>NF2</label>
    </interactant>
    <organismsDiffer>false</organismsDiffer>
    <experiments>3</experiments>
</comment>
<comment type="interaction">
    <interactant intactId="EBI-25842815">
        <id>Q5TAQ9-2</id>
    </interactant>
    <interactant intactId="EBI-988601">
        <id>O43933</id>
        <label>PEX1</label>
    </interactant>
    <organismsDiffer>false</organismsDiffer>
    <experiments>3</experiments>
</comment>
<comment type="interaction">
    <interactant intactId="EBI-25842815">
        <id>Q5TAQ9-2</id>
    </interactant>
    <interactant intactId="EBI-21251460">
        <id>O60260-5</id>
        <label>PRKN</label>
    </interactant>
    <organismsDiffer>false</organismsDiffer>
    <experiments>3</experiments>
</comment>
<comment type="interaction">
    <interactant intactId="EBI-25842815">
        <id>Q5TAQ9-2</id>
    </interactant>
    <interactant intactId="EBI-396669">
        <id>Q9Y3C5</id>
        <label>RNF11</label>
    </interactant>
    <organismsDiffer>false</organismsDiffer>
    <experiments>3</experiments>
</comment>
<comment type="interaction">
    <interactant intactId="EBI-25842815">
        <id>Q5TAQ9-2</id>
    </interactant>
    <interactant intactId="EBI-5235340">
        <id>Q7Z699</id>
        <label>SPRED1</label>
    </interactant>
    <organismsDiffer>false</organismsDiffer>
    <experiments>3</experiments>
</comment>
<comment type="interaction">
    <interactant intactId="EBI-25842815">
        <id>Q5TAQ9-2</id>
    </interactant>
    <interactant intactId="EBI-372899">
        <id>Q13148</id>
        <label>TARDBP</label>
    </interactant>
    <organismsDiffer>false</organismsDiffer>
    <experiments>6</experiments>
</comment>
<comment type="interaction">
    <interactant intactId="EBI-25842815">
        <id>Q5TAQ9-2</id>
    </interactant>
    <interactant intactId="EBI-12806590">
        <id>Q86WV8</id>
        <label>TSC1</label>
    </interactant>
    <organismsDiffer>false</organismsDiffer>
    <experiments>3</experiments>
</comment>
<comment type="interaction">
    <interactant intactId="EBI-25842815">
        <id>Q5TAQ9-2</id>
    </interactant>
    <interactant intactId="EBI-12157263">
        <id>P40337-2</id>
        <label>VHL</label>
    </interactant>
    <organismsDiffer>false</organismsDiffer>
    <experiments>3</experiments>
</comment>
<comment type="interaction">
    <interactant intactId="EBI-25842815">
        <id>Q5TAQ9-2</id>
    </interactant>
    <interactant intactId="EBI-720609">
        <id>O76024</id>
        <label>WFS1</label>
    </interactant>
    <organismsDiffer>false</organismsDiffer>
    <experiments>3</experiments>
</comment>
<comment type="subcellular location">
    <subcellularLocation>
        <location evidence="5">Nucleus</location>
    </subcellularLocation>
    <subcellularLocation>
        <location evidence="5">Cytoplasm</location>
    </subcellularLocation>
    <text evidence="5">It shuttles between the nucleus and the cytoplasm. Nuclear import is mediated by KPNA1 and KPNB1 under the regulation of nuclear GTPase RAN. Nuclear export to the cytoplasm is XPO1 dependent.</text>
</comment>
<comment type="alternative products">
    <event type="alternative splicing"/>
    <isoform>
        <id>Q5TAQ9-1</id>
        <name>1</name>
        <sequence type="displayed"/>
    </isoform>
    <isoform>
        <id>Q5TAQ9-2</id>
        <name>2</name>
        <sequence type="described" ref="VSP_027264 VSP_027265"/>
    </isoform>
</comment>
<comment type="disease" evidence="7">
    <disease id="DI-04139">
        <name>Giant axonal neuropathy 2, autosomal dominant</name>
        <acronym>GAN2</acronym>
        <description>An autosomal dominant peripheral axonal neuropathy characterized by onset of distal sensory impairment with lower extremity muscle weakness and atrophy after the second decade. Clinical features include foot deformities apparent in childhood, and cardiomyopathy in severely affected individuals. Sural nerve biopsy shows giant axonal swelling with neurofilament accumulation.</description>
        <dbReference type="MIM" id="610100"/>
    </disease>
    <text>The disease is caused by variants affecting the gene represented in this entry.</text>
</comment>
<comment type="similarity">
    <text evidence="9">Belongs to the WD repeat DCAF8 family.</text>
</comment>
<comment type="sequence caution" evidence="9">
    <conflict type="frameshift">
        <sequence resource="EMBL-CDS" id="AAA16607"/>
    </conflict>
</comment>
<gene>
    <name type="primary">DCAF8</name>
    <name type="synonym">H326</name>
    <name type="synonym">WDR42A</name>
</gene>
<feature type="chain" id="PRO_0000296957" description="DDB1- and CUL4-associated factor 8">
    <location>
        <begin position="1"/>
        <end position="597"/>
    </location>
</feature>
<feature type="repeat" description="WD 1">
    <location>
        <begin position="191"/>
        <end position="230"/>
    </location>
</feature>
<feature type="repeat" description="WD 2">
    <location>
        <begin position="234"/>
        <end position="275"/>
    </location>
</feature>
<feature type="repeat" description="WD 3">
    <location>
        <begin position="281"/>
        <end position="321"/>
    </location>
</feature>
<feature type="repeat" description="WD 4">
    <location>
        <begin position="329"/>
        <end position="369"/>
    </location>
</feature>
<feature type="repeat" description="WD 5">
    <location>
        <begin position="385"/>
        <end position="424"/>
    </location>
</feature>
<feature type="repeat" description="WD 6">
    <location>
        <begin position="432"/>
        <end position="472"/>
    </location>
</feature>
<feature type="repeat" description="WD 7">
    <location>
        <begin position="476"/>
        <end position="515"/>
    </location>
</feature>
<feature type="region of interest" description="Disordered" evidence="2">
    <location>
        <begin position="1"/>
        <end position="147"/>
    </location>
</feature>
<feature type="region of interest" description="Disordered" evidence="2">
    <location>
        <begin position="558"/>
        <end position="597"/>
    </location>
</feature>
<feature type="short sequence motif" description="Nuclear export signal" evidence="5">
    <location>
        <begin position="39"/>
        <end position="50"/>
    </location>
</feature>
<feature type="short sequence motif" description="Nuclear localization signal" evidence="5">
    <location>
        <begin position="114"/>
        <end position="122"/>
    </location>
</feature>
<feature type="compositionally biased region" description="Polar residues" evidence="2">
    <location>
        <begin position="1"/>
        <end position="24"/>
    </location>
</feature>
<feature type="compositionally biased region" description="Basic and acidic residues" evidence="2">
    <location>
        <begin position="65"/>
        <end position="99"/>
    </location>
</feature>
<feature type="compositionally biased region" description="Acidic residues" evidence="2">
    <location>
        <begin position="100"/>
        <end position="112"/>
    </location>
</feature>
<feature type="compositionally biased region" description="Basic and acidic residues" evidence="2">
    <location>
        <begin position="124"/>
        <end position="137"/>
    </location>
</feature>
<feature type="modified residue" description="Phosphoserine" evidence="1">
    <location>
        <position position="21"/>
    </location>
</feature>
<feature type="modified residue" description="Phosphoserine" evidence="1">
    <location>
        <position position="22"/>
    </location>
</feature>
<feature type="modified residue" description="Phosphoserine" evidence="1">
    <location>
        <position position="99"/>
    </location>
</feature>
<feature type="modified residue" description="Phosphoserine" evidence="1">
    <location>
        <position position="129"/>
    </location>
</feature>
<feature type="modified residue" description="Phosphoserine" evidence="1">
    <location>
        <position position="130"/>
    </location>
</feature>
<feature type="modified residue" description="Omega-N-methylarginine; by PRMT1" evidence="6">
    <location>
        <position position="204"/>
    </location>
</feature>
<feature type="splice variant" id="VSP_027264" description="In isoform 2." evidence="8">
    <original>AKFLPNSGDSTLAMCARDGQVRVAELSATQCC</original>
    <variation>VRQGSIIATERIRHELEKSELQHGLGADSELL</variation>
    <location>
        <begin position="242"/>
        <end position="273"/>
    </location>
</feature>
<feature type="splice variant" id="VSP_027265" description="In isoform 2." evidence="8">
    <location>
        <begin position="274"/>
        <end position="597"/>
    </location>
</feature>
<feature type="sequence variant" id="VAR_071265" description="In GAN2; interaction with DDB1 is decreased; dbSNP:rs587777425." evidence="7">
    <original>R</original>
    <variation>C</variation>
    <location>
        <position position="317"/>
    </location>
</feature>
<feature type="mutagenesis site" description="Abrogates cytoplasmic localization." evidence="5">
    <original>IEVEASDLSLSL</original>
    <variation>AEVEASDASASA</variation>
    <location>
        <begin position="39"/>
        <end position="50"/>
    </location>
</feature>
<feature type="mutagenesis site" description="Abrogates nuclear localization." evidence="5">
    <original>RRRVQRKR</original>
    <variation>AAAVQAKA</variation>
    <location>
        <begin position="115"/>
        <end position="122"/>
    </location>
</feature>
<feature type="mutagenesis site" description="Reduces association with DDB1." evidence="3">
    <original>R</original>
    <variation>A</variation>
    <location>
        <position position="314"/>
    </location>
</feature>
<feature type="mutagenesis site" description="Reduces association with DDB1." evidence="3">
    <original>R</original>
    <variation>A</variation>
    <location>
        <position position="362"/>
    </location>
</feature>
<feature type="sequence conflict" description="In Ref. 6; AAH13107." evidence="9" ref="6">
    <original>D</original>
    <variation>E</variation>
    <location>
        <position position="68"/>
    </location>
</feature>
<feature type="sequence conflict" description="In Ref. 6; AAH98271." evidence="9" ref="6">
    <original>A</original>
    <variation>T</variation>
    <location>
        <position position="123"/>
    </location>
</feature>
<feature type="sequence conflict" description="In Ref. 3; CAH18661." evidence="9" ref="3">
    <original>L</original>
    <variation>F</variation>
    <location>
        <position position="155"/>
    </location>
</feature>
<feature type="sequence conflict" description="In Ref. 1; AAA16607." evidence="9" ref="1">
    <original>QR</original>
    <variation>HG</variation>
    <location>
        <begin position="181"/>
        <end position="182"/>
    </location>
</feature>
<feature type="sequence conflict" description="In Ref. 2; BAD97195." evidence="9" ref="2">
    <original>S</original>
    <variation>G</variation>
    <location>
        <position position="237"/>
    </location>
</feature>
<feature type="sequence conflict" description="In Ref. 3; CAH18661." evidence="9" ref="3">
    <original>K</original>
    <variation>E</variation>
    <location>
        <position position="375"/>
    </location>
</feature>
<feature type="turn" evidence="10">
    <location>
        <begin position="156"/>
        <end position="163"/>
    </location>
</feature>
<accession>Q5TAQ9</accession>
<accession>D3DVE6</accession>
<accession>Q12839</accession>
<accession>Q4QQI6</accession>
<accession>Q53F14</accession>
<accession>Q66K50</accession>
<accession>Q68CS7</accession>
<accession>Q96E00</accession>
<sequence length="597" mass="66852">MSSKGSSTDGRTDLANGSLSSSPEEMSGAEEGRETSSGIEVEASDLSLSLTGDDGGPNRTSTESRGTDTESSGEDKDSDSMEDTGHYSINDENRVHDRSEEEEEEEEEEEEEQPRRRVQRKRANRDQDSSDDERALEDWVSSETSALPRPRWQALPALRERELGSSARFVYEACGARVFVQRFRLQHGLEGHTGCVNTLHFNQRGTWLASGSDDLKVVVWDWVRRQPVLDFESGHKSNVFQAKFLPNSGDSTLAMCARDGQVRVAELSATQCCKNTKRVAQHKGASHKLALEPDSPCTFLSAGEDAVVFTIDLRQDRPASKLVVTKEKEKKVGLYTIYVNPANTHQFAVGGRDQFVRIYDQRKIDENENNGVLKKFCPHHLVNSESKANITCLVYSHDGTELLASYNDEDIYLFNSSHSDGAQYVKRYKGHRNNATVKGVNFYGPKSEFVVSGSDCGHIFLWEKSSCQIIQFMEGDKGGVVNCLEPHPHLPVLATSGLDHDVKIWAPTAEASTELTGLKDVIKKNKRERDEDSLHQTDLFDSHMLWFLMHHLRQRRHHRRWREPGVGATDADSDESPSSSDTSDEEEGPDRVQCMPS</sequence>